<dbReference type="EC" id="2.3.1.-"/>
<dbReference type="EMBL" id="AAFI02000005">
    <property type="protein sequence ID" value="EAL72850.1"/>
    <property type="molecule type" value="Genomic_DNA"/>
</dbReference>
<dbReference type="RefSeq" id="XP_646445.1">
    <property type="nucleotide sequence ID" value="XM_641353.1"/>
</dbReference>
<dbReference type="SMR" id="Q55CN6"/>
<dbReference type="FunCoup" id="Q55CN6">
    <property type="interactions" value="3"/>
</dbReference>
<dbReference type="STRING" id="44689.Q55CN6"/>
<dbReference type="PaxDb" id="44689-DDB0235216"/>
<dbReference type="EnsemblProtists" id="EAL72850">
    <property type="protein sequence ID" value="EAL72850"/>
    <property type="gene ID" value="DDB_G0271000"/>
</dbReference>
<dbReference type="GeneID" id="8617404"/>
<dbReference type="KEGG" id="ddi:DDB_G0271000"/>
<dbReference type="dictyBase" id="DDB_G0271000">
    <property type="gene designation" value="pks3"/>
</dbReference>
<dbReference type="VEuPathDB" id="AmoebaDB:DDB_G0271000"/>
<dbReference type="eggNOG" id="KOG1178">
    <property type="taxonomic scope" value="Eukaryota"/>
</dbReference>
<dbReference type="eggNOG" id="KOG1202">
    <property type="taxonomic scope" value="Eukaryota"/>
</dbReference>
<dbReference type="HOGENOM" id="CLU_000022_31_0_1"/>
<dbReference type="InParanoid" id="Q55CN6"/>
<dbReference type="OMA" id="VHTGCFT"/>
<dbReference type="PhylomeDB" id="Q55CN6"/>
<dbReference type="PRO" id="PR:Q55CN6"/>
<dbReference type="Proteomes" id="UP000002195">
    <property type="component" value="Chromosome 1"/>
</dbReference>
<dbReference type="GO" id="GO:0016020">
    <property type="term" value="C:membrane"/>
    <property type="evidence" value="ECO:0007669"/>
    <property type="project" value="UniProtKB-SubCell"/>
</dbReference>
<dbReference type="GO" id="GO:0004315">
    <property type="term" value="F:3-oxoacyl-[acyl-carrier-protein] synthase activity"/>
    <property type="evidence" value="ECO:0007669"/>
    <property type="project" value="InterPro"/>
</dbReference>
<dbReference type="GO" id="GO:0016491">
    <property type="term" value="F:oxidoreductase activity"/>
    <property type="evidence" value="ECO:0007669"/>
    <property type="project" value="InterPro"/>
</dbReference>
<dbReference type="GO" id="GO:0006633">
    <property type="term" value="P:fatty acid biosynthetic process"/>
    <property type="evidence" value="ECO:0000318"/>
    <property type="project" value="GO_Central"/>
</dbReference>
<dbReference type="CDD" id="cd05195">
    <property type="entry name" value="enoyl_red"/>
    <property type="match status" value="1"/>
</dbReference>
<dbReference type="CDD" id="cd08954">
    <property type="entry name" value="KR_1_FAS_SDR_x"/>
    <property type="match status" value="1"/>
</dbReference>
<dbReference type="CDD" id="cd00833">
    <property type="entry name" value="PKS"/>
    <property type="match status" value="1"/>
</dbReference>
<dbReference type="CDD" id="cd05235">
    <property type="entry name" value="SDR_e1"/>
    <property type="match status" value="1"/>
</dbReference>
<dbReference type="Gene3D" id="3.40.47.10">
    <property type="match status" value="1"/>
</dbReference>
<dbReference type="Gene3D" id="1.10.1200.10">
    <property type="entry name" value="ACP-like"/>
    <property type="match status" value="1"/>
</dbReference>
<dbReference type="Gene3D" id="3.40.366.10">
    <property type="entry name" value="Malonyl-Coenzyme A Acyl Carrier Protein, domain 2"/>
    <property type="match status" value="1"/>
</dbReference>
<dbReference type="Gene3D" id="3.90.180.10">
    <property type="entry name" value="Medium-chain alcohol dehydrogenases, catalytic domain"/>
    <property type="match status" value="1"/>
</dbReference>
<dbReference type="Gene3D" id="3.40.50.720">
    <property type="entry name" value="NAD(P)-binding Rossmann-like Domain"/>
    <property type="match status" value="3"/>
</dbReference>
<dbReference type="Gene3D" id="3.10.129.110">
    <property type="entry name" value="Polyketide synthase dehydratase"/>
    <property type="match status" value="1"/>
</dbReference>
<dbReference type="Gene3D" id="3.40.50.150">
    <property type="entry name" value="Vaccinia Virus protein VP39"/>
    <property type="match status" value="1"/>
</dbReference>
<dbReference type="InterPro" id="IPR001227">
    <property type="entry name" value="Ac_transferase_dom_sf"/>
</dbReference>
<dbReference type="InterPro" id="IPR036736">
    <property type="entry name" value="ACP-like_sf"/>
</dbReference>
<dbReference type="InterPro" id="IPR014043">
    <property type="entry name" value="Acyl_transferase_dom"/>
</dbReference>
<dbReference type="InterPro" id="IPR016035">
    <property type="entry name" value="Acyl_Trfase/lysoPLipase"/>
</dbReference>
<dbReference type="InterPro" id="IPR013120">
    <property type="entry name" value="Far_NAD-bd"/>
</dbReference>
<dbReference type="InterPro" id="IPR011032">
    <property type="entry name" value="GroES-like_sf"/>
</dbReference>
<dbReference type="InterPro" id="IPR018201">
    <property type="entry name" value="Ketoacyl_synth_AS"/>
</dbReference>
<dbReference type="InterPro" id="IPR014031">
    <property type="entry name" value="Ketoacyl_synth_C"/>
</dbReference>
<dbReference type="InterPro" id="IPR014030">
    <property type="entry name" value="Ketoacyl_synth_N"/>
</dbReference>
<dbReference type="InterPro" id="IPR016036">
    <property type="entry name" value="Malonyl_transacylase_ACP-bd"/>
</dbReference>
<dbReference type="InterPro" id="IPR036291">
    <property type="entry name" value="NAD(P)-bd_dom_sf"/>
</dbReference>
<dbReference type="InterPro" id="IPR032821">
    <property type="entry name" value="PKS_assoc"/>
</dbReference>
<dbReference type="InterPro" id="IPR020841">
    <property type="entry name" value="PKS_Beta-ketoAc_synthase_dom"/>
</dbReference>
<dbReference type="InterPro" id="IPR042104">
    <property type="entry name" value="PKS_dehydratase_sf"/>
</dbReference>
<dbReference type="InterPro" id="IPR049551">
    <property type="entry name" value="PKS_DH_C"/>
</dbReference>
<dbReference type="InterPro" id="IPR020843">
    <property type="entry name" value="PKS_ER"/>
</dbReference>
<dbReference type="InterPro" id="IPR013968">
    <property type="entry name" value="PKS_KR"/>
</dbReference>
<dbReference type="InterPro" id="IPR049900">
    <property type="entry name" value="PKS_mFAS_DH"/>
</dbReference>
<dbReference type="InterPro" id="IPR050444">
    <property type="entry name" value="Polyketide_Synthase"/>
</dbReference>
<dbReference type="InterPro" id="IPR009081">
    <property type="entry name" value="PP-bd_ACP"/>
</dbReference>
<dbReference type="InterPro" id="IPR029063">
    <property type="entry name" value="SAM-dependent_MTases_sf"/>
</dbReference>
<dbReference type="InterPro" id="IPR010080">
    <property type="entry name" value="Thioester_reductase-like_dom"/>
</dbReference>
<dbReference type="InterPro" id="IPR016039">
    <property type="entry name" value="Thiolase-like"/>
</dbReference>
<dbReference type="PANTHER" id="PTHR45681:SF4">
    <property type="entry name" value="BETA-KETOACYL SYNTHASE FAMILY PROTEIN-RELATED"/>
    <property type="match status" value="1"/>
</dbReference>
<dbReference type="PANTHER" id="PTHR45681">
    <property type="entry name" value="POLYKETIDE SYNTHASE 44-RELATED"/>
    <property type="match status" value="1"/>
</dbReference>
<dbReference type="Pfam" id="PF23297">
    <property type="entry name" value="ACP_SdgA_C"/>
    <property type="match status" value="1"/>
</dbReference>
<dbReference type="Pfam" id="PF00698">
    <property type="entry name" value="Acyl_transf_1"/>
    <property type="match status" value="1"/>
</dbReference>
<dbReference type="Pfam" id="PF13602">
    <property type="entry name" value="ADH_zinc_N_2"/>
    <property type="match status" value="1"/>
</dbReference>
<dbReference type="Pfam" id="PF16197">
    <property type="entry name" value="KAsynt_C_assoc"/>
    <property type="match status" value="1"/>
</dbReference>
<dbReference type="Pfam" id="PF00109">
    <property type="entry name" value="ketoacyl-synt"/>
    <property type="match status" value="1"/>
</dbReference>
<dbReference type="Pfam" id="PF02801">
    <property type="entry name" value="Ketoacyl-synt_C"/>
    <property type="match status" value="1"/>
</dbReference>
<dbReference type="Pfam" id="PF08659">
    <property type="entry name" value="KR"/>
    <property type="match status" value="1"/>
</dbReference>
<dbReference type="Pfam" id="PF07993">
    <property type="entry name" value="NAD_binding_4"/>
    <property type="match status" value="1"/>
</dbReference>
<dbReference type="Pfam" id="PF14765">
    <property type="entry name" value="PS-DH"/>
    <property type="match status" value="1"/>
</dbReference>
<dbReference type="SMART" id="SM00827">
    <property type="entry name" value="PKS_AT"/>
    <property type="match status" value="1"/>
</dbReference>
<dbReference type="SMART" id="SM00829">
    <property type="entry name" value="PKS_ER"/>
    <property type="match status" value="1"/>
</dbReference>
<dbReference type="SMART" id="SM00822">
    <property type="entry name" value="PKS_KR"/>
    <property type="match status" value="1"/>
</dbReference>
<dbReference type="SMART" id="SM00825">
    <property type="entry name" value="PKS_KS"/>
    <property type="match status" value="1"/>
</dbReference>
<dbReference type="SUPFAM" id="SSF47336">
    <property type="entry name" value="ACP-like"/>
    <property type="match status" value="1"/>
</dbReference>
<dbReference type="SUPFAM" id="SSF52151">
    <property type="entry name" value="FabD/lysophospholipase-like"/>
    <property type="match status" value="1"/>
</dbReference>
<dbReference type="SUPFAM" id="SSF50129">
    <property type="entry name" value="GroES-like"/>
    <property type="match status" value="1"/>
</dbReference>
<dbReference type="SUPFAM" id="SSF51735">
    <property type="entry name" value="NAD(P)-binding Rossmann-fold domains"/>
    <property type="match status" value="3"/>
</dbReference>
<dbReference type="SUPFAM" id="SSF55048">
    <property type="entry name" value="Probable ACP-binding domain of malonyl-CoA ACP transacylase"/>
    <property type="match status" value="1"/>
</dbReference>
<dbReference type="SUPFAM" id="SSF53335">
    <property type="entry name" value="S-adenosyl-L-methionine-dependent methyltransferases"/>
    <property type="match status" value="1"/>
</dbReference>
<dbReference type="SUPFAM" id="SSF53901">
    <property type="entry name" value="Thiolase-like"/>
    <property type="match status" value="1"/>
</dbReference>
<dbReference type="PROSITE" id="PS50075">
    <property type="entry name" value="CARRIER"/>
    <property type="match status" value="1"/>
</dbReference>
<dbReference type="PROSITE" id="PS00606">
    <property type="entry name" value="KS3_1"/>
    <property type="match status" value="1"/>
</dbReference>
<dbReference type="PROSITE" id="PS52004">
    <property type="entry name" value="KS3_2"/>
    <property type="match status" value="1"/>
</dbReference>
<dbReference type="PROSITE" id="PS52019">
    <property type="entry name" value="PKS_MFAS_DH"/>
    <property type="match status" value="1"/>
</dbReference>
<keyword id="KW-0472">Membrane</keyword>
<keyword id="KW-0596">Phosphopantetheine</keyword>
<keyword id="KW-0597">Phosphoprotein</keyword>
<keyword id="KW-1185">Reference proteome</keyword>
<keyword id="KW-0808">Transferase</keyword>
<keyword id="KW-0812">Transmembrane</keyword>
<keyword id="KW-1133">Transmembrane helix</keyword>
<gene>
    <name type="primary">pks3</name>
    <name type="ORF">DDB_G0271000</name>
</gene>
<sequence>MNVSAYLPTCLPTYLPTCLPTYLPTYLPTYLPICLSEENNGIGIIGIGFRLPGGGSGKSLGNPSELWKELVNGYDGIIETNERWSDNFNKLGEINNRYGGLLPMDEVKSFDPLFFGISPPEATAIDPQQRLLLKCTWEAIEDAMIDPINLRGSNTSVFIGNTTHEYRDLNRTIDSIQTNIFSSSSHSSSNRVSNIFDFHGPSITIDTACSSSSNAVVLGCKSIIEGNSKMSIVGGTSLIFDANTPKSFSYMNMLSKDGRCKSFDANADGYVKSECIGVLLLKDLNQAIIDGDRVYCVIKGTSSNVDGNGYSDKSNFYSPSAQSQAENIKMALSSGNINAKDVDYVEAHGTGTPVGDPIEVEGISSIFKDNHSKENPLLIGSFKSMIGHCEASSGIASLVKCCLMFKNRYFIPNLHFKTPNPLIKFNEWNLKVVVEPTPFPKKEITMAVNNFGVTGSNVCIILKDFNYNHNSSSDNNNTINLKQQQHQNNIEYLIPFSANSTKSLEQYQSLISNFNQETMEFNDFVKEQIMSKSNSLYQRSVILGSNWNDFKDNLISTNNNIKTIKTTSSNISIKSKNPIIIMVFCGQGSQYNTMALELYKNEPIFRKTMDMLDNKLSKYYGFSILEKLRSIPVDDMKSIHNPALAQPAICMVQISLFELYKHWGIKPTFIVGHSLGEVTAAYCSGMIDLETECYLIYHRSIAQSTTTGCGRMLSINISPEKFIEQFSSRYPDVEISCYNSPTSIVIGGKEDQLNKISEELKSKGEFTSMLGSLSSFHTSSQKAIKEYILSLDYKSKESEIPIFSTVTTNLFDYKTTPYSPKYTYENILKSVNFTQTIENLYKHIENNQLGTDIVFIELAPHPTLQFYLKQMIPKDSSYFGKGDSISIYSPLHKKKNDVKEIRQTISQLYCQNGYNINFKCQFENINRSIVPTHKLPLYQWDEKQFWKINSLYENYYLTGPPIDILGNSITDSPFVKSYQTFINIKRKPFQYLKGHVVKGKFYFPGCGYIDNLLKIYPSQDITISTLEFSTPFIFTDDSVNHCLQTNIYPTGKTEYKVLFHFKDQKKNEWIQSSFGNFQLFKHNGEKSLKIFNQKYNIKDLIEKRCNLTKLTKEDLYDHIKLKTGLTYSGMFQAVSMCYLGDNCSLSVVSLELPKHLPDQKSFFNSSILDCCLHGMIGLVDEHCQLVFDRIEGFNLYSSNIPSARDQHTNVYVYSSLNAKMGDSYFASIVVMLEDGTVLIEIDNAACTSLTPIQDSLKIEAPTNELYSTYLQSKDSLILPPQTFESLYQQEKGQNDILVGTIIKQSLVPFVNEKMVFRILDFSSGFADYNGTTFHSSNNVLEKFNQLLKEFPLCEIDIEYTFGSVPQSLTSSIKDKLSHINERVSILYRDYSINDPLLLEDNQLKPSQYDIVLINDLEKETNDIKATLYMIYNLMVPNGQLILINNDGNNLIEIKELLDQCNFKDTIISNDKKSIIQTRKPQLLSELSPNPNIDSYDQIIIYSNDDSEICNKFLKSLESTDDKILSIISTISKFNEFVEKQSITDKSVIYFIKTMEQLTLDNFKSITFEYIEINRKLLKLNSMCKHVLITSDSRKDNYLASSVIGAARYFDEFQQLQLFTLDFDKESIIEYTHNNNEKNLVSLIELLTDKKISIQKEYLIRNGKVYFERIKKEQNLRKKFKSESYQDLVENDLVAVLSPNLEYELKPMTKDLEPFEVQVEIKSFALNYKDYLTYIGSVPPEMVNHKTGDINDPEFGSDFSGVITRVSKNNCSEFKVGDQVYGTAYNTASSKSIIDSGSIYFKPNNLSHEQASTIPVVYSTSLHSIYNIGNLKNYESILIHSASGGVGLSSLNILKWKGHCSYIFLTVGSPEKEKYLRDTYGSLITGIYSTRDKSYVQKIKDKLKELGSDKTGVDLILNTLSSDYMDSNFNCLSKSGRIVDLSITHLNSNEYIDNKKFKFNYGYHNVELLFIAAPILKKLLKSISKAIENNELINNLPITQYSNVNIKNAFEYINQRKHIGKIVVNHDTDLVGNLIKEKINSTSNLDFTLLKSNYQININNLGKNIIVTGQSGIVFEIIKWIVKFAPLVENIIILSKSSMKWQLELLVNRNKHIKFHFKSVDVGDINSMGKAIDEVSNDIDNIDSIFHYAFHQITKNVEAINMDTLDISFGAKTIGAIILHDQSIKRGWKLKNFIIASSVTSSLGSESQCSYVCANNVLESFSQYRKSLGLPSICTSYGLIKSTGFVSRNENVSVMFENLGFNPLSINTILGSLDLQIQNQELSTNLIVSSFNFSNITKYNPQKNNFSKIDYQVSLEEKNKVNQLGHDGNQDNKNSVNQMFLEKVSEVLSIEISKINIDIKLSAYGADSLSIVQLKNWVDKELSGNIITIQQLQTNTISSSIKIITNSLDKKKEGKNKSSTVVNNTNEITTTTKTFEYWKNEAKLDETIIASSIKSDLIIDNKMDKVILLSGSTGFLGGYLLLNLVKMKNCSKIYCLTRSGHLSDQIDLMNKIIDNLKHHKLFEMFEQSELEKIFPVRGDLRKSKLGLSDKMYLEISNQVNLILSCGADINLNANYDEIKPTNVDSTKEFIKLSVSKGTNKPMIPIVNLSSFSIFFGQKLNDEIEFDEYQVGIPSLSNLNNLPGGYIQSKLICEHLLLEASSRGIPAMTIRLPSIFSNPHTGIGHSGDLLQLIIKSISVTKYFPIEPTSLFISPVTWVAQNIINLIFNEGCWSKTKINTLNIISLNGELQTTNEIFLMIKKNFNYKETTLINWKKMISESNDKTCIRLRTFHPLDFTPTKYHMSKEFKISKNTKSLLISFGSYDGWNITEQMVLNLLKQ</sequence>
<comment type="function">
    <text evidence="1">Probable polyketide synthase.</text>
</comment>
<comment type="cofactor">
    <cofactor evidence="1">
        <name>pantetheine 4'-phosphate</name>
        <dbReference type="ChEBI" id="CHEBI:47942"/>
    </cofactor>
    <text evidence="1">Binds 1 phosphopantetheine covalently.</text>
</comment>
<comment type="subcellular location">
    <subcellularLocation>
        <location evidence="7">Membrane</location>
        <topology evidence="7">Single-pass membrane protein</topology>
    </subcellularLocation>
</comment>
<comment type="domain">
    <text evidence="1">Modular protein that is responsible for the completion of one condensation-processing cycle. The beta-ketoacyl synthase region is responsible for the actual condensation reaction while the acyl/malonyl transferase region is responsible for incorporating carboxylic acids units onto an acyl carrier protein (ACP) domain (By similarity).</text>
</comment>
<comment type="miscellaneous">
    <text>Encoded by one of the numerous copies of polyketide synthase genes localized in chromosome 1.</text>
</comment>
<organism>
    <name type="scientific">Dictyostelium discoideum</name>
    <name type="common">Social amoeba</name>
    <dbReference type="NCBI Taxonomy" id="44689"/>
    <lineage>
        <taxon>Eukaryota</taxon>
        <taxon>Amoebozoa</taxon>
        <taxon>Evosea</taxon>
        <taxon>Eumycetozoa</taxon>
        <taxon>Dictyostelia</taxon>
        <taxon>Dictyosteliales</taxon>
        <taxon>Dictyosteliaceae</taxon>
        <taxon>Dictyostelium</taxon>
    </lineage>
</organism>
<accession>Q55CN6</accession>
<name>PKS3_DICDI</name>
<reference key="1">
    <citation type="journal article" date="2005" name="Nature">
        <title>The genome of the social amoeba Dictyostelium discoideum.</title>
        <authorList>
            <person name="Eichinger L."/>
            <person name="Pachebat J.A."/>
            <person name="Gloeckner G."/>
            <person name="Rajandream M.A."/>
            <person name="Sucgang R."/>
            <person name="Berriman M."/>
            <person name="Song J."/>
            <person name="Olsen R."/>
            <person name="Szafranski K."/>
            <person name="Xu Q."/>
            <person name="Tunggal B."/>
            <person name="Kummerfeld S."/>
            <person name="Madera M."/>
            <person name="Konfortov B.A."/>
            <person name="Rivero F."/>
            <person name="Bankier A.T."/>
            <person name="Lehmann R."/>
            <person name="Hamlin N."/>
            <person name="Davies R."/>
            <person name="Gaudet P."/>
            <person name="Fey P."/>
            <person name="Pilcher K."/>
            <person name="Chen G."/>
            <person name="Saunders D."/>
            <person name="Sodergren E.J."/>
            <person name="Davis P."/>
            <person name="Kerhornou A."/>
            <person name="Nie X."/>
            <person name="Hall N."/>
            <person name="Anjard C."/>
            <person name="Hemphill L."/>
            <person name="Bason N."/>
            <person name="Farbrother P."/>
            <person name="Desany B."/>
            <person name="Just E."/>
            <person name="Morio T."/>
            <person name="Rost R."/>
            <person name="Churcher C.M."/>
            <person name="Cooper J."/>
            <person name="Haydock S."/>
            <person name="van Driessche N."/>
            <person name="Cronin A."/>
            <person name="Goodhead I."/>
            <person name="Muzny D.M."/>
            <person name="Mourier T."/>
            <person name="Pain A."/>
            <person name="Lu M."/>
            <person name="Harper D."/>
            <person name="Lindsay R."/>
            <person name="Hauser H."/>
            <person name="James K.D."/>
            <person name="Quiles M."/>
            <person name="Madan Babu M."/>
            <person name="Saito T."/>
            <person name="Buchrieser C."/>
            <person name="Wardroper A."/>
            <person name="Felder M."/>
            <person name="Thangavelu M."/>
            <person name="Johnson D."/>
            <person name="Knights A."/>
            <person name="Loulseged H."/>
            <person name="Mungall K.L."/>
            <person name="Oliver K."/>
            <person name="Price C."/>
            <person name="Quail M.A."/>
            <person name="Urushihara H."/>
            <person name="Hernandez J."/>
            <person name="Rabbinowitsch E."/>
            <person name="Steffen D."/>
            <person name="Sanders M."/>
            <person name="Ma J."/>
            <person name="Kohara Y."/>
            <person name="Sharp S."/>
            <person name="Simmonds M.N."/>
            <person name="Spiegler S."/>
            <person name="Tivey A."/>
            <person name="Sugano S."/>
            <person name="White B."/>
            <person name="Walker D."/>
            <person name="Woodward J.R."/>
            <person name="Winckler T."/>
            <person name="Tanaka Y."/>
            <person name="Shaulsky G."/>
            <person name="Schleicher M."/>
            <person name="Weinstock G.M."/>
            <person name="Rosenthal A."/>
            <person name="Cox E.C."/>
            <person name="Chisholm R.L."/>
            <person name="Gibbs R.A."/>
            <person name="Loomis W.F."/>
            <person name="Platzer M."/>
            <person name="Kay R.R."/>
            <person name="Williams J.G."/>
            <person name="Dear P.H."/>
            <person name="Noegel A.A."/>
            <person name="Barrell B.G."/>
            <person name="Kuspa A."/>
        </authorList>
    </citation>
    <scope>NUCLEOTIDE SEQUENCE [LARGE SCALE GENOMIC DNA]</scope>
    <source>
        <strain>AX4</strain>
    </source>
</reference>
<reference key="2">
    <citation type="journal article" date="2007" name="Bioinformatics">
        <title>Polyketide synthase genes and the natural products potential of Dictyostelium discoideum.</title>
        <authorList>
            <person name="Zucko J."/>
            <person name="Skunca N."/>
            <person name="Curk T."/>
            <person name="Zupan B."/>
            <person name="Long P.F."/>
            <person name="Cullum J."/>
            <person name="Kessin R.H."/>
            <person name="Hranueli D."/>
        </authorList>
    </citation>
    <scope>IDENTIFICATION</scope>
</reference>
<evidence type="ECO:0000250" key="1"/>
<evidence type="ECO:0000255" key="2"/>
<evidence type="ECO:0000255" key="3">
    <source>
        <dbReference type="PROSITE-ProRule" id="PRU00258"/>
    </source>
</evidence>
<evidence type="ECO:0000255" key="4">
    <source>
        <dbReference type="PROSITE-ProRule" id="PRU01348"/>
    </source>
</evidence>
<evidence type="ECO:0000255" key="5">
    <source>
        <dbReference type="PROSITE-ProRule" id="PRU01363"/>
    </source>
</evidence>
<evidence type="ECO:0000255" key="6">
    <source>
        <dbReference type="PROSITE-ProRule" id="PRU10022"/>
    </source>
</evidence>
<evidence type="ECO:0000305" key="7"/>
<proteinExistence type="inferred from homology"/>
<feature type="chain" id="PRO_0000376879" description="Probable polyketide synthase 3">
    <location>
        <begin position="1"/>
        <end position="2837"/>
    </location>
</feature>
<feature type="transmembrane region" description="Helical" evidence="2">
    <location>
        <begin position="2464"/>
        <end position="2484"/>
    </location>
</feature>
<feature type="domain" description="Ketosynthase family 3 (KS3)" evidence="4">
    <location>
        <begin position="39"/>
        <end position="464"/>
    </location>
</feature>
<feature type="domain" description="PKS/mFAS DH" evidence="5">
    <location>
        <begin position="962"/>
        <end position="1255"/>
    </location>
</feature>
<feature type="domain" description="Carrier" evidence="3">
    <location>
        <begin position="2330"/>
        <end position="2407"/>
    </location>
</feature>
<feature type="region of interest" description="Acyl/malonyl transferase">
    <location>
        <begin position="664"/>
        <end position="697"/>
    </location>
</feature>
<feature type="region of interest" description="N-terminal hotdog fold" evidence="5">
    <location>
        <begin position="962"/>
        <end position="1084"/>
    </location>
</feature>
<feature type="region of interest" description="C-terminal hotdog fold" evidence="5">
    <location>
        <begin position="1106"/>
        <end position="1255"/>
    </location>
</feature>
<feature type="active site" description="For beta-ketoacyl synthase activity" evidence="4">
    <location>
        <position position="209"/>
    </location>
</feature>
<feature type="active site" description="For beta-ketoacyl synthase activity" evidence="4">
    <location>
        <position position="348"/>
    </location>
</feature>
<feature type="active site" description="For beta-ketoacyl synthase activity" evidence="4">
    <location>
        <position position="388"/>
    </location>
</feature>
<feature type="active site" description="For acyl/malonyl transferase activity" evidence="6">
    <location>
        <position position="674"/>
    </location>
</feature>
<feature type="active site" description="Proton acceptor; for dehydratase activity" evidence="5">
    <location>
        <position position="995"/>
    </location>
</feature>
<feature type="active site" description="Proton donor; for dehydratase activity" evidence="5">
    <location>
        <position position="1169"/>
    </location>
</feature>
<feature type="modified residue" description="O-(pantetheine 4'-phosphoryl)serine" evidence="3">
    <location>
        <position position="2367"/>
    </location>
</feature>
<protein>
    <recommendedName>
        <fullName>Probable polyketide synthase 3</fullName>
        <shortName>dipks3</shortName>
        <ecNumber>2.3.1.-</ecNumber>
    </recommendedName>
</protein>